<keyword id="KW-0963">Cytoplasm</keyword>
<keyword id="KW-0378">Hydrolase</keyword>
<keyword id="KW-0479">Metal-binding</keyword>
<keyword id="KW-0547">Nucleotide-binding</keyword>
<reference key="1">
    <citation type="journal article" date="2009" name="Infect. Immun.">
        <title>Comparative genomics reveal extensive transposon-mediated genomic plasticity and diversity among potential effector proteins within the genus Coxiella.</title>
        <authorList>
            <person name="Beare P.A."/>
            <person name="Unsworth N."/>
            <person name="Andoh M."/>
            <person name="Voth D.E."/>
            <person name="Omsland A."/>
            <person name="Gilk S.D."/>
            <person name="Williams K.P."/>
            <person name="Sobral B.W."/>
            <person name="Kupko J.J. III"/>
            <person name="Porcella S.F."/>
            <person name="Samuel J.E."/>
            <person name="Heinzen R.A."/>
        </authorList>
    </citation>
    <scope>NUCLEOTIDE SEQUENCE [LARGE SCALE GENOMIC DNA]</scope>
    <source>
        <strain>Dugway 5J108-111</strain>
    </source>
</reference>
<sequence>MKKTATPKLRLLLSNDDGVYAKGLAILAKTLADLGEVDVVAPDRNRSGASNSLTLNAPLHIKNLENGMISVEGTPTDCVHLAITGVLPEMPDMVVAGINAGPNLGDDVWYSGTVAAAMEGRFLGLPALAVSLGGELFRYYETAAKVVYQLIQRIEKDSLPPSTILNINVPDLPYEELKGFEVTRLGTRHRAEPTIRQIDPRGHPIYWVGAAGPEQDSGPGTDFFAMNHHCVSITPLRVDLTHYEAFDQLASWVKRLEM</sequence>
<proteinExistence type="inferred from homology"/>
<name>SURE_COXBN</name>
<evidence type="ECO:0000255" key="1">
    <source>
        <dbReference type="HAMAP-Rule" id="MF_00060"/>
    </source>
</evidence>
<gene>
    <name evidence="1" type="primary">surE</name>
    <name type="ordered locus">CBUD_0329</name>
</gene>
<accession>A9KDH9</accession>
<comment type="function">
    <text evidence="1">Nucleotidase that shows phosphatase activity on nucleoside 5'-monophosphates.</text>
</comment>
<comment type="catalytic activity">
    <reaction evidence="1">
        <text>a ribonucleoside 5'-phosphate + H2O = a ribonucleoside + phosphate</text>
        <dbReference type="Rhea" id="RHEA:12484"/>
        <dbReference type="ChEBI" id="CHEBI:15377"/>
        <dbReference type="ChEBI" id="CHEBI:18254"/>
        <dbReference type="ChEBI" id="CHEBI:43474"/>
        <dbReference type="ChEBI" id="CHEBI:58043"/>
        <dbReference type="EC" id="3.1.3.5"/>
    </reaction>
</comment>
<comment type="cofactor">
    <cofactor evidence="1">
        <name>a divalent metal cation</name>
        <dbReference type="ChEBI" id="CHEBI:60240"/>
    </cofactor>
    <text evidence="1">Binds 1 divalent metal cation per subunit.</text>
</comment>
<comment type="subcellular location">
    <subcellularLocation>
        <location evidence="1">Cytoplasm</location>
    </subcellularLocation>
</comment>
<comment type="similarity">
    <text evidence="1">Belongs to the SurE nucleotidase family.</text>
</comment>
<protein>
    <recommendedName>
        <fullName evidence="1">5'-nucleotidase SurE</fullName>
        <ecNumber evidence="1">3.1.3.5</ecNumber>
    </recommendedName>
    <alternativeName>
        <fullName evidence="1">Nucleoside 5'-monophosphate phosphohydrolase</fullName>
    </alternativeName>
</protein>
<dbReference type="EC" id="3.1.3.5" evidence="1"/>
<dbReference type="EMBL" id="CP000733">
    <property type="protein sequence ID" value="ABS77563.1"/>
    <property type="molecule type" value="Genomic_DNA"/>
</dbReference>
<dbReference type="RefSeq" id="WP_011996524.1">
    <property type="nucleotide sequence ID" value="NC_009727.1"/>
</dbReference>
<dbReference type="SMR" id="A9KDH9"/>
<dbReference type="KEGG" id="cbd:CBUD_0329"/>
<dbReference type="HOGENOM" id="CLU_045192_1_2_6"/>
<dbReference type="Proteomes" id="UP000008555">
    <property type="component" value="Chromosome"/>
</dbReference>
<dbReference type="GO" id="GO:0005737">
    <property type="term" value="C:cytoplasm"/>
    <property type="evidence" value="ECO:0007669"/>
    <property type="project" value="UniProtKB-SubCell"/>
</dbReference>
<dbReference type="GO" id="GO:0008254">
    <property type="term" value="F:3'-nucleotidase activity"/>
    <property type="evidence" value="ECO:0007669"/>
    <property type="project" value="TreeGrafter"/>
</dbReference>
<dbReference type="GO" id="GO:0008253">
    <property type="term" value="F:5'-nucleotidase activity"/>
    <property type="evidence" value="ECO:0007669"/>
    <property type="project" value="UniProtKB-UniRule"/>
</dbReference>
<dbReference type="GO" id="GO:0004309">
    <property type="term" value="F:exopolyphosphatase activity"/>
    <property type="evidence" value="ECO:0007669"/>
    <property type="project" value="TreeGrafter"/>
</dbReference>
<dbReference type="GO" id="GO:0046872">
    <property type="term" value="F:metal ion binding"/>
    <property type="evidence" value="ECO:0007669"/>
    <property type="project" value="UniProtKB-UniRule"/>
</dbReference>
<dbReference type="GO" id="GO:0000166">
    <property type="term" value="F:nucleotide binding"/>
    <property type="evidence" value="ECO:0007669"/>
    <property type="project" value="UniProtKB-KW"/>
</dbReference>
<dbReference type="FunFam" id="3.40.1210.10:FF:000001">
    <property type="entry name" value="5'/3'-nucleotidase SurE"/>
    <property type="match status" value="1"/>
</dbReference>
<dbReference type="Gene3D" id="3.40.1210.10">
    <property type="entry name" value="Survival protein SurE-like phosphatase/nucleotidase"/>
    <property type="match status" value="1"/>
</dbReference>
<dbReference type="HAMAP" id="MF_00060">
    <property type="entry name" value="SurE"/>
    <property type="match status" value="1"/>
</dbReference>
<dbReference type="InterPro" id="IPR030048">
    <property type="entry name" value="SurE"/>
</dbReference>
<dbReference type="InterPro" id="IPR002828">
    <property type="entry name" value="SurE-like_Pase/nucleotidase"/>
</dbReference>
<dbReference type="InterPro" id="IPR036523">
    <property type="entry name" value="SurE-like_sf"/>
</dbReference>
<dbReference type="NCBIfam" id="NF001489">
    <property type="entry name" value="PRK00346.1-3"/>
    <property type="match status" value="1"/>
</dbReference>
<dbReference type="NCBIfam" id="NF001490">
    <property type="entry name" value="PRK00346.1-4"/>
    <property type="match status" value="1"/>
</dbReference>
<dbReference type="NCBIfam" id="TIGR00087">
    <property type="entry name" value="surE"/>
    <property type="match status" value="1"/>
</dbReference>
<dbReference type="PANTHER" id="PTHR30457">
    <property type="entry name" value="5'-NUCLEOTIDASE SURE"/>
    <property type="match status" value="1"/>
</dbReference>
<dbReference type="PANTHER" id="PTHR30457:SF12">
    <property type="entry name" value="5'_3'-NUCLEOTIDASE SURE"/>
    <property type="match status" value="1"/>
</dbReference>
<dbReference type="Pfam" id="PF01975">
    <property type="entry name" value="SurE"/>
    <property type="match status" value="1"/>
</dbReference>
<dbReference type="SUPFAM" id="SSF64167">
    <property type="entry name" value="SurE-like"/>
    <property type="match status" value="1"/>
</dbReference>
<organism>
    <name type="scientific">Coxiella burnetii (strain Dugway 5J108-111)</name>
    <dbReference type="NCBI Taxonomy" id="434922"/>
    <lineage>
        <taxon>Bacteria</taxon>
        <taxon>Pseudomonadati</taxon>
        <taxon>Pseudomonadota</taxon>
        <taxon>Gammaproteobacteria</taxon>
        <taxon>Legionellales</taxon>
        <taxon>Coxiellaceae</taxon>
        <taxon>Coxiella</taxon>
    </lineage>
</organism>
<feature type="chain" id="PRO_1000075023" description="5'-nucleotidase SurE">
    <location>
        <begin position="1"/>
        <end position="258"/>
    </location>
</feature>
<feature type="binding site" evidence="1">
    <location>
        <position position="16"/>
    </location>
    <ligand>
        <name>a divalent metal cation</name>
        <dbReference type="ChEBI" id="CHEBI:60240"/>
    </ligand>
</feature>
<feature type="binding site" evidence="1">
    <location>
        <position position="17"/>
    </location>
    <ligand>
        <name>a divalent metal cation</name>
        <dbReference type="ChEBI" id="CHEBI:60240"/>
    </ligand>
</feature>
<feature type="binding site" evidence="1">
    <location>
        <position position="47"/>
    </location>
    <ligand>
        <name>a divalent metal cation</name>
        <dbReference type="ChEBI" id="CHEBI:60240"/>
    </ligand>
</feature>
<feature type="binding site" evidence="1">
    <location>
        <position position="99"/>
    </location>
    <ligand>
        <name>a divalent metal cation</name>
        <dbReference type="ChEBI" id="CHEBI:60240"/>
    </ligand>
</feature>